<dbReference type="PIR" id="JA0142">
    <property type="entry name" value="JA0142"/>
</dbReference>
<dbReference type="GO" id="GO:0004867">
    <property type="term" value="F:serine-type endopeptidase inhibitor activity"/>
    <property type="evidence" value="ECO:0007669"/>
    <property type="project" value="UniProtKB-KW"/>
</dbReference>
<dbReference type="InterPro" id="IPR011065">
    <property type="entry name" value="Kunitz_inhibitor_STI-like_sf"/>
</dbReference>
<dbReference type="InterPro" id="IPR002160">
    <property type="entry name" value="Prot_inh_Kunz-lg"/>
</dbReference>
<dbReference type="SUPFAM" id="SSF50386">
    <property type="entry name" value="STI-like"/>
    <property type="match status" value="1"/>
</dbReference>
<dbReference type="PROSITE" id="PS00283">
    <property type="entry name" value="SOYBEAN_KUNITZ"/>
    <property type="match status" value="1"/>
</dbReference>
<feature type="chain" id="PRO_0000083287" description="Trypsin inhibitor DE-3">
    <location>
        <begin position="1"/>
        <end position="20" status="greater than"/>
    </location>
</feature>
<feature type="non-terminal residue">
    <location>
        <position position="20"/>
    </location>
</feature>
<reference key="1">
    <citation type="journal article" date="1988" name="Phytochemistry">
        <title>Purification and properties of proteinase inhibitors from Erythrina corallodendron seeds.</title>
        <authorList>
            <person name="Joubert F.J."/>
        </authorList>
    </citation>
    <scope>PROTEIN SEQUENCE</scope>
    <source>
        <tissue>Seed</tissue>
    </source>
</reference>
<accession>P68170</accession>
<accession>P07475</accession>
<keyword id="KW-0903">Direct protein sequencing</keyword>
<keyword id="KW-0646">Protease inhibitor</keyword>
<keyword id="KW-0722">Serine protease inhibitor</keyword>
<name>IDE3_ERYCO</name>
<evidence type="ECO:0000305" key="1"/>
<organism>
    <name type="scientific">Erythrina corallodendron</name>
    <name type="common">Coral tree</name>
    <dbReference type="NCBI Taxonomy" id="3843"/>
    <lineage>
        <taxon>Eukaryota</taxon>
        <taxon>Viridiplantae</taxon>
        <taxon>Streptophyta</taxon>
        <taxon>Embryophyta</taxon>
        <taxon>Tracheophyta</taxon>
        <taxon>Spermatophyta</taxon>
        <taxon>Magnoliopsida</taxon>
        <taxon>eudicotyledons</taxon>
        <taxon>Gunneridae</taxon>
        <taxon>Pentapetalae</taxon>
        <taxon>rosids</taxon>
        <taxon>fabids</taxon>
        <taxon>Fabales</taxon>
        <taxon>Fabaceae</taxon>
        <taxon>Papilionoideae</taxon>
        <taxon>50 kb inversion clade</taxon>
        <taxon>NPAAA clade</taxon>
        <taxon>indigoferoid/millettioid clade</taxon>
        <taxon>Phaseoleae</taxon>
        <taxon>Erythrina</taxon>
    </lineage>
</organism>
<proteinExistence type="evidence at protein level"/>
<protein>
    <recommendedName>
        <fullName>Trypsin inhibitor DE-3</fullName>
    </recommendedName>
</protein>
<comment type="function">
    <text>Inhibition of trypsin.</text>
</comment>
<comment type="similarity">
    <text evidence="1">Belongs to the protease inhibitor I3 (leguminous Kunitz-type inhibitor) family.</text>
</comment>
<sequence>VLLDGNGEVVQNGGTYYLLP</sequence>